<dbReference type="EC" id="2.7.7.3" evidence="1"/>
<dbReference type="EMBL" id="AE016825">
    <property type="protein sequence ID" value="AAQ58778.1"/>
    <property type="molecule type" value="Genomic_DNA"/>
</dbReference>
<dbReference type="SMR" id="Q7NZ19"/>
<dbReference type="STRING" id="243365.CV_1103"/>
<dbReference type="KEGG" id="cvi:CV_1103"/>
<dbReference type="eggNOG" id="COG0669">
    <property type="taxonomic scope" value="Bacteria"/>
</dbReference>
<dbReference type="HOGENOM" id="CLU_100149_0_1_4"/>
<dbReference type="UniPathway" id="UPA00241">
    <property type="reaction ID" value="UER00355"/>
</dbReference>
<dbReference type="Proteomes" id="UP000001424">
    <property type="component" value="Chromosome"/>
</dbReference>
<dbReference type="GO" id="GO:0005737">
    <property type="term" value="C:cytoplasm"/>
    <property type="evidence" value="ECO:0007669"/>
    <property type="project" value="UniProtKB-SubCell"/>
</dbReference>
<dbReference type="GO" id="GO:0005524">
    <property type="term" value="F:ATP binding"/>
    <property type="evidence" value="ECO:0007669"/>
    <property type="project" value="UniProtKB-KW"/>
</dbReference>
<dbReference type="GO" id="GO:0004595">
    <property type="term" value="F:pantetheine-phosphate adenylyltransferase activity"/>
    <property type="evidence" value="ECO:0007669"/>
    <property type="project" value="UniProtKB-UniRule"/>
</dbReference>
<dbReference type="GO" id="GO:0015937">
    <property type="term" value="P:coenzyme A biosynthetic process"/>
    <property type="evidence" value="ECO:0007669"/>
    <property type="project" value="UniProtKB-UniRule"/>
</dbReference>
<dbReference type="CDD" id="cd02163">
    <property type="entry name" value="PPAT"/>
    <property type="match status" value="1"/>
</dbReference>
<dbReference type="Gene3D" id="3.40.50.620">
    <property type="entry name" value="HUPs"/>
    <property type="match status" value="1"/>
</dbReference>
<dbReference type="HAMAP" id="MF_00151">
    <property type="entry name" value="PPAT_bact"/>
    <property type="match status" value="1"/>
</dbReference>
<dbReference type="InterPro" id="IPR004821">
    <property type="entry name" value="Cyt_trans-like"/>
</dbReference>
<dbReference type="InterPro" id="IPR001980">
    <property type="entry name" value="PPAT"/>
</dbReference>
<dbReference type="InterPro" id="IPR014729">
    <property type="entry name" value="Rossmann-like_a/b/a_fold"/>
</dbReference>
<dbReference type="NCBIfam" id="TIGR01510">
    <property type="entry name" value="coaD_prev_kdtB"/>
    <property type="match status" value="1"/>
</dbReference>
<dbReference type="NCBIfam" id="TIGR00125">
    <property type="entry name" value="cyt_tran_rel"/>
    <property type="match status" value="1"/>
</dbReference>
<dbReference type="PANTHER" id="PTHR21342">
    <property type="entry name" value="PHOSPHOPANTETHEINE ADENYLYLTRANSFERASE"/>
    <property type="match status" value="1"/>
</dbReference>
<dbReference type="PANTHER" id="PTHR21342:SF1">
    <property type="entry name" value="PHOSPHOPANTETHEINE ADENYLYLTRANSFERASE"/>
    <property type="match status" value="1"/>
</dbReference>
<dbReference type="Pfam" id="PF01467">
    <property type="entry name" value="CTP_transf_like"/>
    <property type="match status" value="1"/>
</dbReference>
<dbReference type="PRINTS" id="PR01020">
    <property type="entry name" value="LPSBIOSNTHSS"/>
</dbReference>
<dbReference type="SUPFAM" id="SSF52374">
    <property type="entry name" value="Nucleotidylyl transferase"/>
    <property type="match status" value="1"/>
</dbReference>
<comment type="function">
    <text evidence="1">Reversibly transfers an adenylyl group from ATP to 4'-phosphopantetheine, yielding dephospho-CoA (dPCoA) and pyrophosphate.</text>
</comment>
<comment type="catalytic activity">
    <reaction evidence="1">
        <text>(R)-4'-phosphopantetheine + ATP + H(+) = 3'-dephospho-CoA + diphosphate</text>
        <dbReference type="Rhea" id="RHEA:19801"/>
        <dbReference type="ChEBI" id="CHEBI:15378"/>
        <dbReference type="ChEBI" id="CHEBI:30616"/>
        <dbReference type="ChEBI" id="CHEBI:33019"/>
        <dbReference type="ChEBI" id="CHEBI:57328"/>
        <dbReference type="ChEBI" id="CHEBI:61723"/>
        <dbReference type="EC" id="2.7.7.3"/>
    </reaction>
</comment>
<comment type="cofactor">
    <cofactor evidence="1">
        <name>Mg(2+)</name>
        <dbReference type="ChEBI" id="CHEBI:18420"/>
    </cofactor>
</comment>
<comment type="pathway">
    <text evidence="1">Cofactor biosynthesis; coenzyme A biosynthesis; CoA from (R)-pantothenate: step 4/5.</text>
</comment>
<comment type="subunit">
    <text evidence="1">Homohexamer.</text>
</comment>
<comment type="subcellular location">
    <subcellularLocation>
        <location evidence="1">Cytoplasm</location>
    </subcellularLocation>
</comment>
<comment type="similarity">
    <text evidence="1">Belongs to the bacterial CoaD family.</text>
</comment>
<feature type="chain" id="PRO_0000156193" description="Phosphopantetheine adenylyltransferase">
    <location>
        <begin position="1"/>
        <end position="164"/>
    </location>
</feature>
<feature type="binding site" evidence="1">
    <location>
        <begin position="9"/>
        <end position="10"/>
    </location>
    <ligand>
        <name>ATP</name>
        <dbReference type="ChEBI" id="CHEBI:30616"/>
    </ligand>
</feature>
<feature type="binding site" evidence="1">
    <location>
        <position position="9"/>
    </location>
    <ligand>
        <name>substrate</name>
    </ligand>
</feature>
<feature type="binding site" evidence="1">
    <location>
        <position position="17"/>
    </location>
    <ligand>
        <name>ATP</name>
        <dbReference type="ChEBI" id="CHEBI:30616"/>
    </ligand>
</feature>
<feature type="binding site" evidence="1">
    <location>
        <position position="41"/>
    </location>
    <ligand>
        <name>substrate</name>
    </ligand>
</feature>
<feature type="binding site" evidence="1">
    <location>
        <position position="74"/>
    </location>
    <ligand>
        <name>substrate</name>
    </ligand>
</feature>
<feature type="binding site" evidence="1">
    <location>
        <position position="88"/>
    </location>
    <ligand>
        <name>substrate</name>
    </ligand>
</feature>
<feature type="binding site" evidence="1">
    <location>
        <begin position="89"/>
        <end position="91"/>
    </location>
    <ligand>
        <name>ATP</name>
        <dbReference type="ChEBI" id="CHEBI:30616"/>
    </ligand>
</feature>
<feature type="binding site" evidence="1">
    <location>
        <position position="99"/>
    </location>
    <ligand>
        <name>ATP</name>
        <dbReference type="ChEBI" id="CHEBI:30616"/>
    </ligand>
</feature>
<feature type="binding site" evidence="1">
    <location>
        <begin position="124"/>
        <end position="130"/>
    </location>
    <ligand>
        <name>ATP</name>
        <dbReference type="ChEBI" id="CHEBI:30616"/>
    </ligand>
</feature>
<feature type="site" description="Transition state stabilizer" evidence="1">
    <location>
        <position position="17"/>
    </location>
</feature>
<organism>
    <name type="scientific">Chromobacterium violaceum (strain ATCC 12472 / DSM 30191 / JCM 1249 / CCUG 213 / NBRC 12614 / NCIMB 9131 / NCTC 9757 / MK)</name>
    <dbReference type="NCBI Taxonomy" id="243365"/>
    <lineage>
        <taxon>Bacteria</taxon>
        <taxon>Pseudomonadati</taxon>
        <taxon>Pseudomonadota</taxon>
        <taxon>Betaproteobacteria</taxon>
        <taxon>Neisseriales</taxon>
        <taxon>Chromobacteriaceae</taxon>
        <taxon>Chromobacterium</taxon>
    </lineage>
</organism>
<reference key="1">
    <citation type="journal article" date="2003" name="Proc. Natl. Acad. Sci. U.S.A.">
        <title>The complete genome sequence of Chromobacterium violaceum reveals remarkable and exploitable bacterial adaptability.</title>
        <authorList>
            <person name="Vasconcelos A.T.R."/>
            <person name="de Almeida D.F."/>
            <person name="Hungria M."/>
            <person name="Guimaraes C.T."/>
            <person name="Antonio R.V."/>
            <person name="Almeida F.C."/>
            <person name="de Almeida L.G.P."/>
            <person name="de Almeida R."/>
            <person name="Alves-Gomes J.A."/>
            <person name="Andrade E.M."/>
            <person name="Araripe J."/>
            <person name="de Araujo M.F.F."/>
            <person name="Astolfi-Filho S."/>
            <person name="Azevedo V."/>
            <person name="Baptista A.J."/>
            <person name="Bataus L.A.M."/>
            <person name="Batista J.S."/>
            <person name="Belo A."/>
            <person name="van den Berg C."/>
            <person name="Bogo M."/>
            <person name="Bonatto S."/>
            <person name="Bordignon J."/>
            <person name="Brigido M.M."/>
            <person name="Brito C.A."/>
            <person name="Brocchi M."/>
            <person name="Burity H.A."/>
            <person name="Camargo A.A."/>
            <person name="Cardoso D.D.P."/>
            <person name="Carneiro N.P."/>
            <person name="Carraro D.M."/>
            <person name="Carvalho C.M.B."/>
            <person name="Cascardo J.C.M."/>
            <person name="Cavada B.S."/>
            <person name="Chueire L.M.O."/>
            <person name="Creczynski-Pasa T.B."/>
            <person name="Cunha-Junior N.C."/>
            <person name="Fagundes N."/>
            <person name="Falcao C.L."/>
            <person name="Fantinatti F."/>
            <person name="Farias I.P."/>
            <person name="Felipe M.S.S."/>
            <person name="Ferrari L.P."/>
            <person name="Ferro J.A."/>
            <person name="Ferro M.I.T."/>
            <person name="Franco G.R."/>
            <person name="Freitas N.S.A."/>
            <person name="Furlan L.R."/>
            <person name="Gazzinelli R.T."/>
            <person name="Gomes E.A."/>
            <person name="Goncalves P.R."/>
            <person name="Grangeiro T.B."/>
            <person name="Grattapaglia D."/>
            <person name="Grisard E.C."/>
            <person name="Hanna E.S."/>
            <person name="Jardim S.N."/>
            <person name="Laurino J."/>
            <person name="Leoi L.C.T."/>
            <person name="Lima L.F.A."/>
            <person name="Loureiro M.F."/>
            <person name="Lyra M.C.C.P."/>
            <person name="Madeira H.M.F."/>
            <person name="Manfio G.P."/>
            <person name="Maranhao A.Q."/>
            <person name="Martins W.S."/>
            <person name="di Mauro S.M.Z."/>
            <person name="de Medeiros S.R.B."/>
            <person name="Meissner R.V."/>
            <person name="Moreira M.A.M."/>
            <person name="Nascimento F.F."/>
            <person name="Nicolas M.F."/>
            <person name="Oliveira J.G."/>
            <person name="Oliveira S.C."/>
            <person name="Paixao R.F.C."/>
            <person name="Parente J.A."/>
            <person name="Pedrosa F.O."/>
            <person name="Pena S.D.J."/>
            <person name="Pereira J.O."/>
            <person name="Pereira M."/>
            <person name="Pinto L.S.R.C."/>
            <person name="Pinto L.S."/>
            <person name="Porto J.I.R."/>
            <person name="Potrich D.P."/>
            <person name="Ramalho-Neto C.E."/>
            <person name="Reis A.M.M."/>
            <person name="Rigo L.U."/>
            <person name="Rondinelli E."/>
            <person name="Santos E.B.P."/>
            <person name="Santos F.R."/>
            <person name="Schneider M.P.C."/>
            <person name="Seuanez H.N."/>
            <person name="Silva A.M.R."/>
            <person name="da Silva A.L.C."/>
            <person name="Silva D.W."/>
            <person name="Silva R."/>
            <person name="Simoes I.C."/>
            <person name="Simon D."/>
            <person name="Soares C.M.A."/>
            <person name="Soares R.B.A."/>
            <person name="Souza E.M."/>
            <person name="Souza K.R.L."/>
            <person name="Souza R.C."/>
            <person name="Steffens M.B.R."/>
            <person name="Steindel M."/>
            <person name="Teixeira S.R."/>
            <person name="Urmenyi T."/>
            <person name="Vettore A."/>
            <person name="Wassem R."/>
            <person name="Zaha A."/>
            <person name="Simpson A.J.G."/>
        </authorList>
    </citation>
    <scope>NUCLEOTIDE SEQUENCE [LARGE SCALE GENOMIC DNA]</scope>
    <source>
        <strain>ATCC 12472 / DSM 30191 / JCM 1249 / CCUG 213 / NBRC 12614 / NCIMB 9131 / NCTC 9757 / MK</strain>
    </source>
</reference>
<evidence type="ECO:0000255" key="1">
    <source>
        <dbReference type="HAMAP-Rule" id="MF_00151"/>
    </source>
</evidence>
<keyword id="KW-0067">ATP-binding</keyword>
<keyword id="KW-0173">Coenzyme A biosynthesis</keyword>
<keyword id="KW-0963">Cytoplasm</keyword>
<keyword id="KW-0460">Magnesium</keyword>
<keyword id="KW-0547">Nucleotide-binding</keyword>
<keyword id="KW-0548">Nucleotidyltransferase</keyword>
<keyword id="KW-1185">Reference proteome</keyword>
<keyword id="KW-0808">Transferase</keyword>
<proteinExistence type="inferred from homology"/>
<protein>
    <recommendedName>
        <fullName evidence="1">Phosphopantetheine adenylyltransferase</fullName>
        <ecNumber evidence="1">2.7.7.3</ecNumber>
    </recommendedName>
    <alternativeName>
        <fullName evidence="1">Dephospho-CoA pyrophosphorylase</fullName>
    </alternativeName>
    <alternativeName>
        <fullName evidence="1">Pantetheine-phosphate adenylyltransferase</fullName>
        <shortName evidence="1">PPAT</shortName>
    </alternativeName>
</protein>
<name>COAD_CHRVO</name>
<gene>
    <name evidence="1" type="primary">coaD</name>
    <name type="ordered locus">CV_1103</name>
</gene>
<accession>Q7NZ19</accession>
<sequence length="164" mass="18850">MKRAVYAGSFDPVTNGHLWMIREAVELFDELIVAVGVNPDKHCTFSVDERVALLREVTSGFSKLRVDVFENQFLVNYAQSVGANYIVRGIRTASDYEYERTMRYINSDLHPDITTLFLLPPREYAEVSSTMVKGLIGPRGWEGVIRQYLPEPVYRKMLSMYSEQ</sequence>